<comment type="function">
    <text evidence="1">Cell wall formation. Catalyzes the transfer of a GlcNAc subunit on undecaprenyl-pyrophosphoryl-MurNAc-pentapeptide (lipid intermediate I) to form undecaprenyl-pyrophosphoryl-MurNAc-(pentapeptide)GlcNAc (lipid intermediate II).</text>
</comment>
<comment type="catalytic activity">
    <reaction evidence="1">
        <text>di-trans,octa-cis-undecaprenyl diphospho-N-acetyl-alpha-D-muramoyl-L-alanyl-D-glutamyl-meso-2,6-diaminopimeloyl-D-alanyl-D-alanine + UDP-N-acetyl-alpha-D-glucosamine = di-trans,octa-cis-undecaprenyl diphospho-[N-acetyl-alpha-D-glucosaminyl-(1-&gt;4)]-N-acetyl-alpha-D-muramoyl-L-alanyl-D-glutamyl-meso-2,6-diaminopimeloyl-D-alanyl-D-alanine + UDP + H(+)</text>
        <dbReference type="Rhea" id="RHEA:31227"/>
        <dbReference type="ChEBI" id="CHEBI:15378"/>
        <dbReference type="ChEBI" id="CHEBI:57705"/>
        <dbReference type="ChEBI" id="CHEBI:58223"/>
        <dbReference type="ChEBI" id="CHEBI:61387"/>
        <dbReference type="ChEBI" id="CHEBI:61388"/>
        <dbReference type="EC" id="2.4.1.227"/>
    </reaction>
</comment>
<comment type="pathway">
    <text evidence="1">Cell wall biogenesis; peptidoglycan biosynthesis.</text>
</comment>
<comment type="subcellular location">
    <subcellularLocation>
        <location evidence="1">Cell inner membrane</location>
        <topology evidence="1">Peripheral membrane protein</topology>
        <orientation evidence="1">Cytoplasmic side</orientation>
    </subcellularLocation>
</comment>
<comment type="similarity">
    <text evidence="1">Belongs to the glycosyltransferase 28 family. MurG subfamily.</text>
</comment>
<protein>
    <recommendedName>
        <fullName evidence="1">UDP-N-acetylglucosamine--N-acetylmuramyl-(pentapeptide) pyrophosphoryl-undecaprenol N-acetylglucosamine transferase</fullName>
        <ecNumber evidence="1">2.4.1.227</ecNumber>
    </recommendedName>
    <alternativeName>
        <fullName evidence="1">Undecaprenyl-PP-MurNAc-pentapeptide-UDPGlcNAc GlcNAc transferase</fullName>
    </alternativeName>
</protein>
<name>MURG_BLOFL</name>
<organism>
    <name type="scientific">Blochmanniella floridana</name>
    <dbReference type="NCBI Taxonomy" id="203907"/>
    <lineage>
        <taxon>Bacteria</taxon>
        <taxon>Pseudomonadati</taxon>
        <taxon>Pseudomonadota</taxon>
        <taxon>Gammaproteobacteria</taxon>
        <taxon>Enterobacterales</taxon>
        <taxon>Enterobacteriaceae</taxon>
        <taxon>ant endosymbionts</taxon>
        <taxon>Candidatus Blochmanniella</taxon>
    </lineage>
</organism>
<sequence length="360" mass="40580">MNQSVQTIMIIAGGTGGHIFPGLSVARYLMNHGYKVVWIGSKDRIESELVPVYNIDIKYICIQGLRGKKIYQKLITLLFLIFFAMYQSFKIIRCWKPDIVLSMGGYVSGPSSLVAWLYGIPVIIHEQNRIMGLTNRYVSRFAKKILQGFPNTVNGAITSGNPLRYEILSIPDPVHRLEGRTGPIRVLVVGGSTGSFIFNKVIPEVFGKLFGKLIIWHQSGKKGFNDTIQAYKKLHCNSSNYKVVPFIDNMAHAYSWADVIISRSGALMVSEISYVGLPAIFVPFNYHKDYQQYWNAFQLVKSGSAIIIEQERFTSDYVSIILGNWNRKVLLNMAILSKSLEMSNATQLVAQTVMRYLNGK</sequence>
<proteinExistence type="inferred from homology"/>
<accession>Q7U346</accession>
<keyword id="KW-0131">Cell cycle</keyword>
<keyword id="KW-0132">Cell division</keyword>
<keyword id="KW-0997">Cell inner membrane</keyword>
<keyword id="KW-1003">Cell membrane</keyword>
<keyword id="KW-0133">Cell shape</keyword>
<keyword id="KW-0961">Cell wall biogenesis/degradation</keyword>
<keyword id="KW-0328">Glycosyltransferase</keyword>
<keyword id="KW-0472">Membrane</keyword>
<keyword id="KW-0573">Peptidoglycan synthesis</keyword>
<keyword id="KW-1185">Reference proteome</keyword>
<keyword id="KW-0808">Transferase</keyword>
<dbReference type="EC" id="2.4.1.227" evidence="1"/>
<dbReference type="EMBL" id="BX248583">
    <property type="protein sequence ID" value="CAD83663.1"/>
    <property type="molecule type" value="Genomic_DNA"/>
</dbReference>
<dbReference type="SMR" id="Q7U346"/>
<dbReference type="STRING" id="203907.Bfl142"/>
<dbReference type="CAZy" id="GT28">
    <property type="family name" value="Glycosyltransferase Family 28"/>
</dbReference>
<dbReference type="KEGG" id="bfl:Bfl142"/>
<dbReference type="eggNOG" id="COG0707">
    <property type="taxonomic scope" value="Bacteria"/>
</dbReference>
<dbReference type="HOGENOM" id="CLU_037404_2_0_6"/>
<dbReference type="OrthoDB" id="9808936at2"/>
<dbReference type="UniPathway" id="UPA00219"/>
<dbReference type="Proteomes" id="UP000002192">
    <property type="component" value="Chromosome"/>
</dbReference>
<dbReference type="GO" id="GO:0005886">
    <property type="term" value="C:plasma membrane"/>
    <property type="evidence" value="ECO:0007669"/>
    <property type="project" value="UniProtKB-SubCell"/>
</dbReference>
<dbReference type="GO" id="GO:0051991">
    <property type="term" value="F:UDP-N-acetyl-D-glucosamine:N-acetylmuramoyl-L-alanyl-D-glutamyl-meso-2,6-diaminopimelyl-D-alanyl-D-alanine-diphosphoundecaprenol 4-beta-N-acetylglucosaminlytransferase activity"/>
    <property type="evidence" value="ECO:0007669"/>
    <property type="project" value="RHEA"/>
</dbReference>
<dbReference type="GO" id="GO:0050511">
    <property type="term" value="F:undecaprenyldiphospho-muramoylpentapeptide beta-N-acetylglucosaminyltransferase activity"/>
    <property type="evidence" value="ECO:0007669"/>
    <property type="project" value="UniProtKB-UniRule"/>
</dbReference>
<dbReference type="GO" id="GO:0005975">
    <property type="term" value="P:carbohydrate metabolic process"/>
    <property type="evidence" value="ECO:0007669"/>
    <property type="project" value="InterPro"/>
</dbReference>
<dbReference type="GO" id="GO:0051301">
    <property type="term" value="P:cell division"/>
    <property type="evidence" value="ECO:0007669"/>
    <property type="project" value="UniProtKB-KW"/>
</dbReference>
<dbReference type="GO" id="GO:0071555">
    <property type="term" value="P:cell wall organization"/>
    <property type="evidence" value="ECO:0007669"/>
    <property type="project" value="UniProtKB-KW"/>
</dbReference>
<dbReference type="GO" id="GO:0030259">
    <property type="term" value="P:lipid glycosylation"/>
    <property type="evidence" value="ECO:0007669"/>
    <property type="project" value="UniProtKB-UniRule"/>
</dbReference>
<dbReference type="GO" id="GO:0009252">
    <property type="term" value="P:peptidoglycan biosynthetic process"/>
    <property type="evidence" value="ECO:0007669"/>
    <property type="project" value="UniProtKB-UniRule"/>
</dbReference>
<dbReference type="GO" id="GO:0008360">
    <property type="term" value="P:regulation of cell shape"/>
    <property type="evidence" value="ECO:0007669"/>
    <property type="project" value="UniProtKB-KW"/>
</dbReference>
<dbReference type="CDD" id="cd03785">
    <property type="entry name" value="GT28_MurG"/>
    <property type="match status" value="1"/>
</dbReference>
<dbReference type="Gene3D" id="3.40.50.2000">
    <property type="entry name" value="Glycogen Phosphorylase B"/>
    <property type="match status" value="2"/>
</dbReference>
<dbReference type="HAMAP" id="MF_00033">
    <property type="entry name" value="MurG"/>
    <property type="match status" value="1"/>
</dbReference>
<dbReference type="InterPro" id="IPR006009">
    <property type="entry name" value="GlcNAc_MurG"/>
</dbReference>
<dbReference type="InterPro" id="IPR007235">
    <property type="entry name" value="Glyco_trans_28_C"/>
</dbReference>
<dbReference type="InterPro" id="IPR004276">
    <property type="entry name" value="GlycoTrans_28_N"/>
</dbReference>
<dbReference type="NCBIfam" id="TIGR01133">
    <property type="entry name" value="murG"/>
    <property type="match status" value="1"/>
</dbReference>
<dbReference type="PANTHER" id="PTHR21015:SF22">
    <property type="entry name" value="GLYCOSYLTRANSFERASE"/>
    <property type="match status" value="1"/>
</dbReference>
<dbReference type="PANTHER" id="PTHR21015">
    <property type="entry name" value="UDP-N-ACETYLGLUCOSAMINE--N-ACETYLMURAMYL-(PENTAPEPTIDE) PYROPHOSPHORYL-UNDECAPRENOL N-ACETYLGLUCOSAMINE TRANSFERASE 1"/>
    <property type="match status" value="1"/>
</dbReference>
<dbReference type="Pfam" id="PF04101">
    <property type="entry name" value="Glyco_tran_28_C"/>
    <property type="match status" value="1"/>
</dbReference>
<dbReference type="Pfam" id="PF03033">
    <property type="entry name" value="Glyco_transf_28"/>
    <property type="match status" value="1"/>
</dbReference>
<dbReference type="SUPFAM" id="SSF53756">
    <property type="entry name" value="UDP-Glycosyltransferase/glycogen phosphorylase"/>
    <property type="match status" value="1"/>
</dbReference>
<reference key="1">
    <citation type="journal article" date="2003" name="Proc. Natl. Acad. Sci. U.S.A.">
        <title>The genome sequence of Blochmannia floridanus: comparative analysis of reduced genomes.</title>
        <authorList>
            <person name="Gil R."/>
            <person name="Silva F.J."/>
            <person name="Zientz E."/>
            <person name="Delmotte F."/>
            <person name="Gonzalez-Candelas F."/>
            <person name="Latorre A."/>
            <person name="Rausell C."/>
            <person name="Kamerbeek J."/>
            <person name="Gadau J."/>
            <person name="Hoelldobler B."/>
            <person name="van Ham R.C.H.J."/>
            <person name="Gross R."/>
            <person name="Moya A."/>
        </authorList>
    </citation>
    <scope>NUCLEOTIDE SEQUENCE [LARGE SCALE GENOMIC DNA]</scope>
</reference>
<evidence type="ECO:0000255" key="1">
    <source>
        <dbReference type="HAMAP-Rule" id="MF_00033"/>
    </source>
</evidence>
<gene>
    <name evidence="1" type="primary">murG</name>
    <name type="ordered locus">Bfl142</name>
</gene>
<feature type="chain" id="PRO_0000109157" description="UDP-N-acetylglucosamine--N-acetylmuramyl-(pentapeptide) pyrophosphoryl-undecaprenol N-acetylglucosamine transferase">
    <location>
        <begin position="1"/>
        <end position="360"/>
    </location>
</feature>
<feature type="binding site" evidence="1">
    <location>
        <begin position="15"/>
        <end position="17"/>
    </location>
    <ligand>
        <name>UDP-N-acetyl-alpha-D-glucosamine</name>
        <dbReference type="ChEBI" id="CHEBI:57705"/>
    </ligand>
</feature>
<feature type="binding site" evidence="1">
    <location>
        <position position="128"/>
    </location>
    <ligand>
        <name>UDP-N-acetyl-alpha-D-glucosamine</name>
        <dbReference type="ChEBI" id="CHEBI:57705"/>
    </ligand>
</feature>
<feature type="binding site" evidence="1">
    <location>
        <position position="164"/>
    </location>
    <ligand>
        <name>UDP-N-acetyl-alpha-D-glucosamine</name>
        <dbReference type="ChEBI" id="CHEBI:57705"/>
    </ligand>
</feature>
<feature type="binding site" evidence="1">
    <location>
        <position position="192"/>
    </location>
    <ligand>
        <name>UDP-N-acetyl-alpha-D-glucosamine</name>
        <dbReference type="ChEBI" id="CHEBI:57705"/>
    </ligand>
</feature>
<feature type="binding site" evidence="1">
    <location>
        <position position="247"/>
    </location>
    <ligand>
        <name>UDP-N-acetyl-alpha-D-glucosamine</name>
        <dbReference type="ChEBI" id="CHEBI:57705"/>
    </ligand>
</feature>
<feature type="binding site" evidence="1">
    <location>
        <position position="292"/>
    </location>
    <ligand>
        <name>UDP-N-acetyl-alpha-D-glucosamine</name>
        <dbReference type="ChEBI" id="CHEBI:57705"/>
    </ligand>
</feature>